<name>DCNL3_PONAB</name>
<evidence type="ECO:0000250" key="1">
    <source>
        <dbReference type="UniProtKB" id="Q8IWE4"/>
    </source>
</evidence>
<evidence type="ECO:0000255" key="2"/>
<evidence type="ECO:0000255" key="3">
    <source>
        <dbReference type="PROSITE-ProRule" id="PRU00574"/>
    </source>
</evidence>
<evidence type="ECO:0000256" key="4">
    <source>
        <dbReference type="SAM" id="MobiDB-lite"/>
    </source>
</evidence>
<proteinExistence type="evidence at transcript level"/>
<reference key="1">
    <citation type="submission" date="2004-11" db="EMBL/GenBank/DDBJ databases">
        <authorList>
            <consortium name="The German cDNA consortium"/>
        </authorList>
    </citation>
    <scope>NUCLEOTIDE SEQUENCE [LARGE SCALE MRNA]</scope>
    <source>
        <tissue>Kidney</tissue>
    </source>
</reference>
<dbReference type="EMBL" id="CR857932">
    <property type="protein sequence ID" value="CAH90180.1"/>
    <property type="molecule type" value="mRNA"/>
</dbReference>
<dbReference type="EMBL" id="CR859427">
    <property type="protein sequence ID" value="CAH91599.1"/>
    <property type="molecule type" value="mRNA"/>
</dbReference>
<dbReference type="RefSeq" id="NP_001125943.1">
    <property type="nucleotide sequence ID" value="NM_001132471.1"/>
</dbReference>
<dbReference type="RefSeq" id="XP_024097136.1">
    <property type="nucleotide sequence ID" value="XM_024241368.3"/>
</dbReference>
<dbReference type="RefSeq" id="XP_024097137.1">
    <property type="nucleotide sequence ID" value="XM_024241369.3"/>
</dbReference>
<dbReference type="RefSeq" id="XP_054389061.1">
    <property type="nucleotide sequence ID" value="XM_054533086.2"/>
</dbReference>
<dbReference type="RefSeq" id="XP_054389062.1">
    <property type="nucleotide sequence ID" value="XM_054533087.2"/>
</dbReference>
<dbReference type="RefSeq" id="XP_054389063.1">
    <property type="nucleotide sequence ID" value="XM_054533088.2"/>
</dbReference>
<dbReference type="RefSeq" id="XP_054389064.1">
    <property type="nucleotide sequence ID" value="XM_054533089.2"/>
</dbReference>
<dbReference type="RefSeq" id="XP_054389065.1">
    <property type="nucleotide sequence ID" value="XM_054533090.2"/>
</dbReference>
<dbReference type="RefSeq" id="XP_054389067.1">
    <property type="nucleotide sequence ID" value="XM_054533092.2"/>
</dbReference>
<dbReference type="RefSeq" id="XP_063573140.1">
    <property type="nucleotide sequence ID" value="XM_063717070.1"/>
</dbReference>
<dbReference type="SMR" id="Q5R9G1"/>
<dbReference type="FunCoup" id="Q5R9G1">
    <property type="interactions" value="2116"/>
</dbReference>
<dbReference type="STRING" id="9601.ENSPPYP00000008101"/>
<dbReference type="Ensembl" id="ENSPPYT00000008436.3">
    <property type="protein sequence ID" value="ENSPPYP00000008101.2"/>
    <property type="gene ID" value="ENSPPYG00000007164.3"/>
</dbReference>
<dbReference type="GeneID" id="100172877"/>
<dbReference type="KEGG" id="pon:100172877"/>
<dbReference type="CTD" id="123879"/>
<dbReference type="eggNOG" id="KOG3077">
    <property type="taxonomic scope" value="Eukaryota"/>
</dbReference>
<dbReference type="GeneTree" id="ENSGT00940000154944"/>
<dbReference type="HOGENOM" id="CLU_047042_2_0_1"/>
<dbReference type="InParanoid" id="Q5R9G1"/>
<dbReference type="OMA" id="DQMNQNI"/>
<dbReference type="OrthoDB" id="27198at2759"/>
<dbReference type="TreeFam" id="TF313332"/>
<dbReference type="Proteomes" id="UP000001595">
    <property type="component" value="Unplaced"/>
</dbReference>
<dbReference type="GO" id="GO:0005737">
    <property type="term" value="C:cytoplasm"/>
    <property type="evidence" value="ECO:0000250"/>
    <property type="project" value="UniProtKB"/>
</dbReference>
<dbReference type="GO" id="GO:0005829">
    <property type="term" value="C:cytosol"/>
    <property type="evidence" value="ECO:0007669"/>
    <property type="project" value="Ensembl"/>
</dbReference>
<dbReference type="GO" id="GO:0005654">
    <property type="term" value="C:nucleoplasm"/>
    <property type="evidence" value="ECO:0007669"/>
    <property type="project" value="Ensembl"/>
</dbReference>
<dbReference type="GO" id="GO:0005634">
    <property type="term" value="C:nucleus"/>
    <property type="evidence" value="ECO:0000250"/>
    <property type="project" value="UniProtKB"/>
</dbReference>
<dbReference type="GO" id="GO:0048471">
    <property type="term" value="C:perinuclear region of cytoplasm"/>
    <property type="evidence" value="ECO:0000250"/>
    <property type="project" value="UniProtKB"/>
</dbReference>
<dbReference type="GO" id="GO:0005886">
    <property type="term" value="C:plasma membrane"/>
    <property type="evidence" value="ECO:0000250"/>
    <property type="project" value="UniProtKB"/>
</dbReference>
<dbReference type="GO" id="GO:0000151">
    <property type="term" value="C:ubiquitin ligase complex"/>
    <property type="evidence" value="ECO:0007669"/>
    <property type="project" value="TreeGrafter"/>
</dbReference>
<dbReference type="GO" id="GO:0097602">
    <property type="term" value="F:cullin family protein binding"/>
    <property type="evidence" value="ECO:0000250"/>
    <property type="project" value="UniProtKB"/>
</dbReference>
<dbReference type="GO" id="GO:0031624">
    <property type="term" value="F:ubiquitin conjugating enzyme binding"/>
    <property type="evidence" value="ECO:0007669"/>
    <property type="project" value="TreeGrafter"/>
</dbReference>
<dbReference type="GO" id="GO:0032182">
    <property type="term" value="F:ubiquitin-like protein binding"/>
    <property type="evidence" value="ECO:0007669"/>
    <property type="project" value="TreeGrafter"/>
</dbReference>
<dbReference type="GO" id="GO:0030308">
    <property type="term" value="P:negative regulation of cell growth"/>
    <property type="evidence" value="ECO:0000250"/>
    <property type="project" value="UniProtKB"/>
</dbReference>
<dbReference type="GO" id="GO:2000134">
    <property type="term" value="P:negative regulation of G1/S transition of mitotic cell cycle"/>
    <property type="evidence" value="ECO:0000250"/>
    <property type="project" value="UniProtKB"/>
</dbReference>
<dbReference type="GO" id="GO:2000435">
    <property type="term" value="P:negative regulation of protein neddylation"/>
    <property type="evidence" value="ECO:0000250"/>
    <property type="project" value="UniProtKB"/>
</dbReference>
<dbReference type="GO" id="GO:0043065">
    <property type="term" value="P:positive regulation of apoptotic process"/>
    <property type="evidence" value="ECO:0000250"/>
    <property type="project" value="UniProtKB"/>
</dbReference>
<dbReference type="GO" id="GO:2000436">
    <property type="term" value="P:positive regulation of protein neddylation"/>
    <property type="evidence" value="ECO:0000250"/>
    <property type="project" value="UniProtKB"/>
</dbReference>
<dbReference type="GO" id="GO:0045116">
    <property type="term" value="P:protein neddylation"/>
    <property type="evidence" value="ECO:0007669"/>
    <property type="project" value="TreeGrafter"/>
</dbReference>
<dbReference type="GO" id="GO:0010564">
    <property type="term" value="P:regulation of cell cycle process"/>
    <property type="evidence" value="ECO:0000250"/>
    <property type="project" value="UniProtKB"/>
</dbReference>
<dbReference type="GO" id="GO:2000434">
    <property type="term" value="P:regulation of protein neddylation"/>
    <property type="evidence" value="ECO:0000250"/>
    <property type="project" value="UniProtKB"/>
</dbReference>
<dbReference type="GO" id="GO:0010332">
    <property type="term" value="P:response to gamma radiation"/>
    <property type="evidence" value="ECO:0000250"/>
    <property type="project" value="UniProtKB"/>
</dbReference>
<dbReference type="GO" id="GO:0010225">
    <property type="term" value="P:response to UV-C"/>
    <property type="evidence" value="ECO:0000250"/>
    <property type="project" value="UniProtKB"/>
</dbReference>
<dbReference type="FunFam" id="1.10.238.10:FF:000126">
    <property type="entry name" value="DCN1-like protein"/>
    <property type="match status" value="1"/>
</dbReference>
<dbReference type="FunFam" id="1.10.238.200:FF:000003">
    <property type="entry name" value="DCN1-like protein 3"/>
    <property type="match status" value="1"/>
</dbReference>
<dbReference type="Gene3D" id="1.10.238.200">
    <property type="entry name" value="Cullin, PONY binding domain"/>
    <property type="match status" value="1"/>
</dbReference>
<dbReference type="Gene3D" id="1.10.238.10">
    <property type="entry name" value="EF-hand"/>
    <property type="match status" value="1"/>
</dbReference>
<dbReference type="InterPro" id="IPR014764">
    <property type="entry name" value="DCN-prot"/>
</dbReference>
<dbReference type="InterPro" id="IPR042460">
    <property type="entry name" value="DCN1-like_PONY"/>
</dbReference>
<dbReference type="InterPro" id="IPR005176">
    <property type="entry name" value="PONY_dom"/>
</dbReference>
<dbReference type="PANTHER" id="PTHR12281:SF31">
    <property type="entry name" value="DCN1-LIKE PROTEIN 3"/>
    <property type="match status" value="1"/>
</dbReference>
<dbReference type="PANTHER" id="PTHR12281">
    <property type="entry name" value="RP42 RELATED"/>
    <property type="match status" value="1"/>
</dbReference>
<dbReference type="Pfam" id="PF03556">
    <property type="entry name" value="Cullin_binding"/>
    <property type="match status" value="1"/>
</dbReference>
<dbReference type="PROSITE" id="PS51229">
    <property type="entry name" value="DCUN1"/>
    <property type="match status" value="1"/>
</dbReference>
<organism>
    <name type="scientific">Pongo abelii</name>
    <name type="common">Sumatran orangutan</name>
    <name type="synonym">Pongo pygmaeus abelii</name>
    <dbReference type="NCBI Taxonomy" id="9601"/>
    <lineage>
        <taxon>Eukaryota</taxon>
        <taxon>Metazoa</taxon>
        <taxon>Chordata</taxon>
        <taxon>Craniata</taxon>
        <taxon>Vertebrata</taxon>
        <taxon>Euteleostomi</taxon>
        <taxon>Mammalia</taxon>
        <taxon>Eutheria</taxon>
        <taxon>Euarchontoglires</taxon>
        <taxon>Primates</taxon>
        <taxon>Haplorrhini</taxon>
        <taxon>Catarrhini</taxon>
        <taxon>Hominidae</taxon>
        <taxon>Pongo</taxon>
    </lineage>
</organism>
<protein>
    <recommendedName>
        <fullName evidence="1">DCN1-like protein 3</fullName>
        <shortName evidence="1">DCNL3</shortName>
    </recommendedName>
    <alternativeName>
        <fullName>DCUN1 domain-containing protein 3</fullName>
    </alternativeName>
    <alternativeName>
        <fullName>Defective in cullin neddylation protein 1-like protein 3</fullName>
    </alternativeName>
</protein>
<keyword id="KW-1003">Cell membrane</keyword>
<keyword id="KW-0963">Cytoplasm</keyword>
<keyword id="KW-0449">Lipoprotein</keyword>
<keyword id="KW-0472">Membrane</keyword>
<keyword id="KW-0519">Myristate</keyword>
<keyword id="KW-0539">Nucleus</keyword>
<keyword id="KW-1185">Reference proteome</keyword>
<feature type="initiator methionine" description="Removed" evidence="2">
    <location>
        <position position="1"/>
    </location>
</feature>
<feature type="chain" id="PRO_0000320050" description="DCN1-like protein 3">
    <location>
        <begin position="2"/>
        <end position="304"/>
    </location>
</feature>
<feature type="domain" description="DCUN1" evidence="3">
    <location>
        <begin position="86"/>
        <end position="278"/>
    </location>
</feature>
<feature type="region of interest" description="Disordered" evidence="4">
    <location>
        <begin position="1"/>
        <end position="86"/>
    </location>
</feature>
<feature type="region of interest" description="Disordered" evidence="4">
    <location>
        <begin position="284"/>
        <end position="304"/>
    </location>
</feature>
<feature type="lipid moiety-binding region" description="N-myristoyl glycine" evidence="1 2">
    <location>
        <position position="2"/>
    </location>
</feature>
<sequence>MGQCVTKCKNPSSTLGSKNGDRDPSNKSHSRRGAGHREEQVPPCGKPGGDILVNGTKKAEAATEACQLPTSSGDAGRESKSNAEESSLQRLEELFRRYKDEREDAILEEGMERFCNDLCVDPTEFRVLLLAWKFQAATMCKFTRKEFFDGCKAISADSIDGICARFPSLLTEAKQEDKFKDLYRFTFQFGLDSEEGQRSLHREIAIALWKLVFTQNNPPVLDQWLNFLTENPSGIKGISRDTWNMFLNFTQVIGPDLSNYSEDEAWPSLFDTFVEWEMERRKREGEGRGALSSGPEGLCPEEQT</sequence>
<accession>Q5R9G1</accession>
<comment type="function">
    <text evidence="1">Contributes to the neddylation of all cullins by transferring NEDD8 from N-terminally acetylated NEDD8-conjugating E2s enzyme to different cullin C-terminal domain-RBX complexes and may play a role in the cell cycle progression by regulating the SCF ubiquitin E3 ligase complex, after UV damage. At the cell membrane, can promote and as well inhibit cullins neddylation.</text>
</comment>
<comment type="subunit">
    <text evidence="1">Part of a complex containing DCUN1D3, CUL3 and RBX1. Interacts (via the DCUN1 domain) with the unneddylated cullins: interacts with CUL1, CUL2, CUL3, CUL4A, CUL4B and CUL5; these interactions promote the cullin neddylation and the identity of the cullin dictates the affinity of the interaction. Interacts preferentially with CUL3; this interaction triggers the relocalization of CUL3 to the cell membrane where CUL3 is neddylated. Interacts (via DCUN1 domain) with RBX1. May also interact with regulators or subunits of cullin-RING ligases such as RNF7, ELOB and DDB1; these interactions are bridged by cullins. Interacts (via DCUN1 domain) with CAND1; this interaction is bridged by cullins and strongly inhibits cullin neddylation. These CAND-cullin-DCNL complexes can only be neddylated in the presence of a substrate adapter. Interacts (via DCUN1 domain) with the N-terminally acetylated form of UBE2M and UBE2F.</text>
</comment>
<comment type="subcellular location">
    <subcellularLocation>
        <location evidence="1">Cell membrane</location>
    </subcellularLocation>
    <subcellularLocation>
        <location evidence="1">Cytoplasm</location>
    </subcellularLocation>
    <subcellularLocation>
        <location evidence="1">Nucleus</location>
    </subcellularLocation>
    <subcellularLocation>
        <location evidence="1">Cytoplasm</location>
        <location evidence="1">Perinuclear region</location>
    </subcellularLocation>
    <text evidence="1">After UVC treatment, the protein enters to the nucleus gradually. Cell membrane localization is essential for CUL3 neddylation.</text>
</comment>
<comment type="domain">
    <text evidence="1">The DCUN1 domain, also known as PONY domain, mediates the interaction with different cullins. The DCUN1 domain mediates the interaction with the N-terminally acetylated NEDD8-conjugating E2s enzyme leading to the NEDD8 transfer from N-terminally acetylated NEDD8-conjugating E2s enzyme to different cullin C-terminal domain-RBX complexes; the neddylation efficiency correlates with the DCUN1D5-cullin and DCUN1D5-E2 interaction affinities. This domain is also involved in CAND1-, cullins- and RBX1-binding.</text>
</comment>
<gene>
    <name evidence="1" type="primary">DCUN1D3</name>
</gene>